<dbReference type="EMBL" id="AE000782">
    <property type="protein sequence ID" value="AAB89117.1"/>
    <property type="molecule type" value="Genomic_DNA"/>
</dbReference>
<dbReference type="PIR" id="C69518">
    <property type="entry name" value="C69518"/>
</dbReference>
<dbReference type="RefSeq" id="WP_010879636.1">
    <property type="nucleotide sequence ID" value="NC_000917.1"/>
</dbReference>
<dbReference type="STRING" id="224325.AF_2147"/>
<dbReference type="PaxDb" id="224325-AF_2147"/>
<dbReference type="EnsemblBacteria" id="AAB89117">
    <property type="protein sequence ID" value="AAB89117"/>
    <property type="gene ID" value="AF_2147"/>
</dbReference>
<dbReference type="KEGG" id="afu:AF_2147"/>
<dbReference type="eggNOG" id="arCOG12217">
    <property type="taxonomic scope" value="Archaea"/>
</dbReference>
<dbReference type="HOGENOM" id="CLU_1393515_0_0_2"/>
<dbReference type="OrthoDB" id="380428at2157"/>
<dbReference type="Proteomes" id="UP000002199">
    <property type="component" value="Chromosome"/>
</dbReference>
<reference key="1">
    <citation type="journal article" date="1997" name="Nature">
        <title>The complete genome sequence of the hyperthermophilic, sulphate-reducing archaeon Archaeoglobus fulgidus.</title>
        <authorList>
            <person name="Klenk H.-P."/>
            <person name="Clayton R.A."/>
            <person name="Tomb J.-F."/>
            <person name="White O."/>
            <person name="Nelson K.E."/>
            <person name="Ketchum K.A."/>
            <person name="Dodson R.J."/>
            <person name="Gwinn M.L."/>
            <person name="Hickey E.K."/>
            <person name="Peterson J.D."/>
            <person name="Richardson D.L."/>
            <person name="Kerlavage A.R."/>
            <person name="Graham D.E."/>
            <person name="Kyrpides N.C."/>
            <person name="Fleischmann R.D."/>
            <person name="Quackenbush J."/>
            <person name="Lee N.H."/>
            <person name="Sutton G.G."/>
            <person name="Gill S.R."/>
            <person name="Kirkness E.F."/>
            <person name="Dougherty B.A."/>
            <person name="McKenney K."/>
            <person name="Adams M.D."/>
            <person name="Loftus B.J."/>
            <person name="Peterson S.N."/>
            <person name="Reich C.I."/>
            <person name="McNeil L.K."/>
            <person name="Badger J.H."/>
            <person name="Glodek A."/>
            <person name="Zhou L."/>
            <person name="Overbeek R."/>
            <person name="Gocayne J.D."/>
            <person name="Weidman J.F."/>
            <person name="McDonald L.A."/>
            <person name="Utterback T.R."/>
            <person name="Cotton M.D."/>
            <person name="Spriggs T."/>
            <person name="Artiach P."/>
            <person name="Kaine B.P."/>
            <person name="Sykes S.M."/>
            <person name="Sadow P.W."/>
            <person name="D'Andrea K.P."/>
            <person name="Bowman C."/>
            <person name="Fujii C."/>
            <person name="Garland S.A."/>
            <person name="Mason T.M."/>
            <person name="Olsen G.J."/>
            <person name="Fraser C.M."/>
            <person name="Smith H.O."/>
            <person name="Woese C.R."/>
            <person name="Venter J.C."/>
        </authorList>
    </citation>
    <scope>NUCLEOTIDE SEQUENCE [LARGE SCALE GENOMIC DNA]</scope>
    <source>
        <strain>ATCC 49558 / DSM 4304 / JCM 9628 / NBRC 100126 / VC-16</strain>
    </source>
</reference>
<gene>
    <name type="ordered locus">AF_2147</name>
</gene>
<sequence>MEIIQNVFNRAENGDRIMISFPDMLSFFTVTKWLNEQFGNPLWILWTDAAVERLNHLGKKLGYPVSGNAVTIGAIKECLFLDVVARYDFYDDVSSLLKSLPVGNVLLISFGVNFLEIFGQGLSKAIEFIIEHENGILCTCTVGEAPDILLPFHDTFIEIKSGEESYLTYKSYVAKLRFSVDGGTIEMSDSFLVSE</sequence>
<keyword id="KW-1185">Reference proteome</keyword>
<name>Y2147_ARCFU</name>
<proteinExistence type="predicted"/>
<organism>
    <name type="scientific">Archaeoglobus fulgidus (strain ATCC 49558 / DSM 4304 / JCM 9628 / NBRC 100126 / VC-16)</name>
    <dbReference type="NCBI Taxonomy" id="224325"/>
    <lineage>
        <taxon>Archaea</taxon>
        <taxon>Methanobacteriati</taxon>
        <taxon>Methanobacteriota</taxon>
        <taxon>Archaeoglobi</taxon>
        <taxon>Archaeoglobales</taxon>
        <taxon>Archaeoglobaceae</taxon>
        <taxon>Archaeoglobus</taxon>
    </lineage>
</organism>
<accession>O28135</accession>
<protein>
    <recommendedName>
        <fullName>Uncharacterized protein AF_2147</fullName>
    </recommendedName>
</protein>
<feature type="chain" id="PRO_0000128103" description="Uncharacterized protein AF_2147">
    <location>
        <begin position="1"/>
        <end position="195"/>
    </location>
</feature>